<proteinExistence type="evidence at protein level"/>
<gene>
    <name evidence="1" type="primary">psbK</name>
    <name type="ordered locus">AM1_3851</name>
</gene>
<comment type="function">
    <text evidence="1">One of the components of the core complex of photosystem II (PSII). PSII is a light-driven water:plastoquinone oxidoreductase that uses light energy to abstract electrons from H(2)O, generating O(2) and a proton gradient subsequently used for ATP formation. It consists of a core antenna complex that captures photons, and an electron transfer chain that converts photonic excitation into a charge separation.</text>
</comment>
<comment type="subunit">
    <text evidence="1">PSII is composed of 1 copy each of membrane proteins PsbA, PsbB, PsbC, PsbD, PsbE, PsbF, PsbH, PsbI, PsbJ, PsbK, PsbL, PsbM, PsbT, PsbX, PsbY, PsbZ, Psb30/Ycf12, peripheral proteins PsbO, CyanoQ (PsbQ), PsbU, PsbV and a large number of cofactors. It forms dimeric complexes.</text>
</comment>
<comment type="subcellular location">
    <subcellularLocation>
        <location evidence="1">Cellular thylakoid membrane</location>
        <topology evidence="1">Single-pass membrane protein</topology>
    </subcellularLocation>
</comment>
<comment type="similarity">
    <text evidence="1">Belongs to the PsbK family.</text>
</comment>
<protein>
    <recommendedName>
        <fullName evidence="1">Photosystem II reaction center protein K</fullName>
        <shortName evidence="1">PSII-K</shortName>
    </recommendedName>
</protein>
<organism>
    <name type="scientific">Acaryochloris marina (strain MBIC 11017)</name>
    <dbReference type="NCBI Taxonomy" id="329726"/>
    <lineage>
        <taxon>Bacteria</taxon>
        <taxon>Bacillati</taxon>
        <taxon>Cyanobacteriota</taxon>
        <taxon>Cyanophyceae</taxon>
        <taxon>Acaryochloridales</taxon>
        <taxon>Acaryochloridaceae</taxon>
        <taxon>Acaryochloris</taxon>
    </lineage>
</organism>
<feature type="propeptide" id="PRO_1000080858" evidence="1">
    <location>
        <begin position="1"/>
        <end position="8"/>
    </location>
</feature>
<feature type="chain" id="PRO_1000080859" description="Photosystem II reaction center protein K" evidence="1">
    <location>
        <begin position="9"/>
        <end position="45"/>
    </location>
</feature>
<feature type="transmembrane region" description="Helical" evidence="1">
    <location>
        <begin position="24"/>
        <end position="44"/>
    </location>
</feature>
<feature type="helix" evidence="2">
    <location>
        <begin position="14"/>
        <end position="17"/>
    </location>
</feature>
<feature type="helix" evidence="2">
    <location>
        <begin position="18"/>
        <end position="23"/>
    </location>
</feature>
<feature type="helix" evidence="2">
    <location>
        <begin position="27"/>
        <end position="41"/>
    </location>
</feature>
<evidence type="ECO:0000255" key="1">
    <source>
        <dbReference type="HAMAP-Rule" id="MF_00441"/>
    </source>
</evidence>
<evidence type="ECO:0007829" key="2">
    <source>
        <dbReference type="PDB" id="7YMI"/>
    </source>
</evidence>
<keyword id="KW-0002">3D-structure</keyword>
<keyword id="KW-0472">Membrane</keyword>
<keyword id="KW-0602">Photosynthesis</keyword>
<keyword id="KW-0604">Photosystem II</keyword>
<keyword id="KW-0674">Reaction center</keyword>
<keyword id="KW-1185">Reference proteome</keyword>
<keyword id="KW-0793">Thylakoid</keyword>
<keyword id="KW-0812">Transmembrane</keyword>
<keyword id="KW-1133">Transmembrane helix</keyword>
<dbReference type="EMBL" id="CP000828">
    <property type="protein sequence ID" value="ABW28836.1"/>
    <property type="molecule type" value="Genomic_DNA"/>
</dbReference>
<dbReference type="RefSeq" id="WP_010473496.1">
    <property type="nucleotide sequence ID" value="NC_009925.1"/>
</dbReference>
<dbReference type="PDB" id="7YMI">
    <property type="method" value="EM"/>
    <property type="resolution" value="3.30 A"/>
    <property type="chains" value="K/k=1-45"/>
</dbReference>
<dbReference type="PDB" id="7YMM">
    <property type="method" value="EM"/>
    <property type="resolution" value="3.60 A"/>
    <property type="chains" value="1K/2K/3K/4K=1-45"/>
</dbReference>
<dbReference type="PDBsum" id="7YMI"/>
<dbReference type="PDBsum" id="7YMM"/>
<dbReference type="EMDB" id="EMD-33929"/>
<dbReference type="EMDB" id="EMD-33933"/>
<dbReference type="SMR" id="B0C6Z7"/>
<dbReference type="STRING" id="329726.AM1_3851"/>
<dbReference type="KEGG" id="amr:AM1_3851"/>
<dbReference type="eggNOG" id="ENOG5032YQR">
    <property type="taxonomic scope" value="Bacteria"/>
</dbReference>
<dbReference type="HOGENOM" id="CLU_174355_0_0_3"/>
<dbReference type="OrthoDB" id="532552at2"/>
<dbReference type="Proteomes" id="UP000000268">
    <property type="component" value="Chromosome"/>
</dbReference>
<dbReference type="GO" id="GO:0009539">
    <property type="term" value="C:photosystem II reaction center"/>
    <property type="evidence" value="ECO:0007669"/>
    <property type="project" value="InterPro"/>
</dbReference>
<dbReference type="GO" id="GO:0031676">
    <property type="term" value="C:plasma membrane-derived thylakoid membrane"/>
    <property type="evidence" value="ECO:0007669"/>
    <property type="project" value="UniProtKB-SubCell"/>
</dbReference>
<dbReference type="GO" id="GO:0015979">
    <property type="term" value="P:photosynthesis"/>
    <property type="evidence" value="ECO:0007669"/>
    <property type="project" value="UniProtKB-UniRule"/>
</dbReference>
<dbReference type="HAMAP" id="MF_00441">
    <property type="entry name" value="PSII_PsbK"/>
    <property type="match status" value="1"/>
</dbReference>
<dbReference type="InterPro" id="IPR003687">
    <property type="entry name" value="PSII_PsbK"/>
</dbReference>
<dbReference type="InterPro" id="IPR037270">
    <property type="entry name" value="PSII_PsbK_sf"/>
</dbReference>
<dbReference type="NCBIfam" id="NF002715">
    <property type="entry name" value="PRK02553.1"/>
    <property type="match status" value="1"/>
</dbReference>
<dbReference type="PANTHER" id="PTHR35325">
    <property type="match status" value="1"/>
</dbReference>
<dbReference type="PANTHER" id="PTHR35325:SF1">
    <property type="entry name" value="PHOTOSYSTEM II REACTION CENTER PROTEIN K"/>
    <property type="match status" value="1"/>
</dbReference>
<dbReference type="Pfam" id="PF02533">
    <property type="entry name" value="PsbK"/>
    <property type="match status" value="1"/>
</dbReference>
<dbReference type="SUPFAM" id="SSF161037">
    <property type="entry name" value="Photosystem II reaction center protein K, PsbK"/>
    <property type="match status" value="1"/>
</dbReference>
<reference key="1">
    <citation type="journal article" date="2008" name="Proc. Natl. Acad. Sci. U.S.A.">
        <title>Niche adaptation and genome expansion in the chlorophyll d-producing cyanobacterium Acaryochloris marina.</title>
        <authorList>
            <person name="Swingley W.D."/>
            <person name="Chen M."/>
            <person name="Cheung P.C."/>
            <person name="Conrad A.L."/>
            <person name="Dejesa L.C."/>
            <person name="Hao J."/>
            <person name="Honchak B.M."/>
            <person name="Karbach L.E."/>
            <person name="Kurdoglu A."/>
            <person name="Lahiri S."/>
            <person name="Mastrian S.D."/>
            <person name="Miyashita H."/>
            <person name="Page L."/>
            <person name="Ramakrishna P."/>
            <person name="Satoh S."/>
            <person name="Sattley W.M."/>
            <person name="Shimada Y."/>
            <person name="Taylor H.L."/>
            <person name="Tomo T."/>
            <person name="Tsuchiya T."/>
            <person name="Wang Z.T."/>
            <person name="Raymond J."/>
            <person name="Mimuro M."/>
            <person name="Blankenship R.E."/>
            <person name="Touchman J.W."/>
        </authorList>
    </citation>
    <scope>NUCLEOTIDE SEQUENCE [LARGE SCALE GENOMIC DNA]</scope>
    <source>
        <strain>MBIC 11017</strain>
    </source>
</reference>
<sequence length="45" mass="4937">MEAVLLLAKLPEAFSVFSPIVDVMPVIPLFFLALAFVWQAAVGFK</sequence>
<name>PSBK_ACAM1</name>
<accession>B0C6Z7</accession>